<keyword id="KW-0002">3D-structure</keyword>
<keyword id="KW-0010">Activator</keyword>
<keyword id="KW-0235">DNA replication</keyword>
<keyword id="KW-0238">DNA-binding</keyword>
<keyword id="KW-0244">Early protein</keyword>
<keyword id="KW-1048">Host nucleus</keyword>
<keyword id="KW-1017">Isopeptide bond</keyword>
<keyword id="KW-0597">Phosphoprotein</keyword>
<keyword id="KW-1185">Reference proteome</keyword>
<keyword id="KW-0678">Repressor</keyword>
<keyword id="KW-0804">Transcription</keyword>
<keyword id="KW-0805">Transcription regulation</keyword>
<keyword id="KW-0832">Ubl conjugation</keyword>
<accession>P06790</accession>
<dbReference type="EMBL" id="X05015">
    <property type="protein sequence ID" value="CAA28667.1"/>
    <property type="status" value="ALT_SEQ"/>
    <property type="molecule type" value="Genomic_DNA"/>
</dbReference>
<dbReference type="PIR" id="D26251">
    <property type="entry name" value="W2WL18"/>
</dbReference>
<dbReference type="PDB" id="1F9F">
    <property type="method" value="X-ray"/>
    <property type="resolution" value="1.90 A"/>
    <property type="chains" value="A/B/C/D=287-365"/>
</dbReference>
<dbReference type="PDB" id="1JJ4">
    <property type="method" value="X-ray"/>
    <property type="resolution" value="2.40 A"/>
    <property type="chains" value="A/B=287-365"/>
</dbReference>
<dbReference type="PDB" id="1QQH">
    <property type="method" value="X-ray"/>
    <property type="resolution" value="2.10 A"/>
    <property type="chains" value="A=70-213"/>
</dbReference>
<dbReference type="PDB" id="1TUE">
    <property type="method" value="X-ray"/>
    <property type="resolution" value="2.10 A"/>
    <property type="chains" value="B/E/G/J/L/Q=1-215"/>
</dbReference>
<dbReference type="PDBsum" id="1F9F"/>
<dbReference type="PDBsum" id="1JJ4"/>
<dbReference type="PDBsum" id="1QQH"/>
<dbReference type="PDBsum" id="1TUE"/>
<dbReference type="BMRB" id="P06790"/>
<dbReference type="SMR" id="P06790"/>
<dbReference type="IntAct" id="P06790">
    <property type="interactions" value="57"/>
</dbReference>
<dbReference type="MINT" id="P06790"/>
<dbReference type="KEGG" id="vg:1489085"/>
<dbReference type="EvolutionaryTrace" id="P06790"/>
<dbReference type="Proteomes" id="UP000009109">
    <property type="component" value="Genome"/>
</dbReference>
<dbReference type="GO" id="GO:0044191">
    <property type="term" value="C:host cell mitochondrial membrane"/>
    <property type="evidence" value="ECO:0000314"/>
    <property type="project" value="CACAO"/>
</dbReference>
<dbReference type="GO" id="GO:0042025">
    <property type="term" value="C:host cell nucleus"/>
    <property type="evidence" value="ECO:0007669"/>
    <property type="project" value="UniProtKB-SubCell"/>
</dbReference>
<dbReference type="GO" id="GO:0044163">
    <property type="term" value="C:host cytoskeleton"/>
    <property type="evidence" value="ECO:0000314"/>
    <property type="project" value="CACAO"/>
</dbReference>
<dbReference type="GO" id="GO:0003677">
    <property type="term" value="F:DNA binding"/>
    <property type="evidence" value="ECO:0007669"/>
    <property type="project" value="UniProtKB-UniRule"/>
</dbReference>
<dbReference type="GO" id="GO:0003700">
    <property type="term" value="F:DNA-binding transcription factor activity"/>
    <property type="evidence" value="ECO:0007669"/>
    <property type="project" value="UniProtKB-UniRule"/>
</dbReference>
<dbReference type="GO" id="GO:0000166">
    <property type="term" value="F:nucleotide binding"/>
    <property type="evidence" value="ECO:0007669"/>
    <property type="project" value="UniProtKB-UniRule"/>
</dbReference>
<dbReference type="GO" id="GO:0006260">
    <property type="term" value="P:DNA replication"/>
    <property type="evidence" value="ECO:0007669"/>
    <property type="project" value="UniProtKB-KW"/>
</dbReference>
<dbReference type="GO" id="GO:0006351">
    <property type="term" value="P:DNA-templated transcription"/>
    <property type="evidence" value="ECO:0007669"/>
    <property type="project" value="UniProtKB-UniRule"/>
</dbReference>
<dbReference type="GO" id="GO:0006275">
    <property type="term" value="P:regulation of DNA replication"/>
    <property type="evidence" value="ECO:0007669"/>
    <property type="project" value="UniProtKB-UniRule"/>
</dbReference>
<dbReference type="GO" id="GO:0039693">
    <property type="term" value="P:viral DNA genome replication"/>
    <property type="evidence" value="ECO:0007669"/>
    <property type="project" value="UniProtKB-UniRule"/>
</dbReference>
<dbReference type="Gene3D" id="3.30.70.330">
    <property type="match status" value="1"/>
</dbReference>
<dbReference type="Gene3D" id="1.10.287.30">
    <property type="entry name" value="E2 (early) protein, N terminal domain, subdomain 1"/>
    <property type="match status" value="1"/>
</dbReference>
<dbReference type="Gene3D" id="2.170.200.10">
    <property type="entry name" value="Papillomavirus E2 early protein domain"/>
    <property type="match status" value="1"/>
</dbReference>
<dbReference type="HAMAP" id="MF_04001">
    <property type="entry name" value="PPV_E2"/>
    <property type="match status" value="1"/>
</dbReference>
<dbReference type="InterPro" id="IPR035975">
    <property type="entry name" value="E2/EBNA1_C_sf"/>
</dbReference>
<dbReference type="InterPro" id="IPR012677">
    <property type="entry name" value="Nucleotide-bd_a/b_plait_sf"/>
</dbReference>
<dbReference type="InterPro" id="IPR000427">
    <property type="entry name" value="Papillomavirus_E2_C"/>
</dbReference>
<dbReference type="InterPro" id="IPR001866">
    <property type="entry name" value="PPV_E2_N"/>
</dbReference>
<dbReference type="InterPro" id="IPR033668">
    <property type="entry name" value="Reg_prot_E2"/>
</dbReference>
<dbReference type="InterPro" id="IPR036050">
    <property type="entry name" value="Regulatory_protein_E2_N"/>
</dbReference>
<dbReference type="InterPro" id="IPR042503">
    <property type="entry name" value="Regulatory_protein_E2_N_1"/>
</dbReference>
<dbReference type="InterPro" id="IPR042504">
    <property type="entry name" value="Regulatory_protein_E2_N_2"/>
</dbReference>
<dbReference type="Pfam" id="PF00511">
    <property type="entry name" value="PPV_E2_C"/>
    <property type="match status" value="1"/>
</dbReference>
<dbReference type="Pfam" id="PF00508">
    <property type="entry name" value="PPV_E2_N"/>
    <property type="match status" value="1"/>
</dbReference>
<dbReference type="SUPFAM" id="SSF51332">
    <property type="entry name" value="E2 regulatory, transactivation domain"/>
    <property type="match status" value="1"/>
</dbReference>
<dbReference type="SUPFAM" id="SSF54957">
    <property type="entry name" value="Viral DNA-binding domain"/>
    <property type="match status" value="1"/>
</dbReference>
<feature type="chain" id="PRO_0000133197" description="Regulatory protein E2">
    <location>
        <begin position="1"/>
        <end position="365"/>
    </location>
</feature>
<feature type="region of interest" description="Transactivation domain" evidence="1">
    <location>
        <begin position="1"/>
        <end position="205"/>
    </location>
</feature>
<feature type="region of interest" description="DNA-binding domain" evidence="1">
    <location>
        <begin position="286"/>
        <end position="365"/>
    </location>
</feature>
<feature type="cross-link" description="Glycyl lysine isopeptide (Lys-Gly) (interchain with G-Cter in SUMO)" evidence="1">
    <location>
        <position position="293"/>
    </location>
</feature>
<feature type="helix" evidence="4">
    <location>
        <begin position="4"/>
        <end position="25"/>
    </location>
</feature>
<feature type="helix" evidence="4">
    <location>
        <begin position="30"/>
        <end position="52"/>
    </location>
</feature>
<feature type="strand" evidence="4">
    <location>
        <begin position="56"/>
        <end position="58"/>
    </location>
</feature>
<feature type="helix" evidence="3">
    <location>
        <begin position="72"/>
        <end position="88"/>
    </location>
</feature>
<feature type="turn" evidence="3">
    <location>
        <begin position="90"/>
        <end position="93"/>
    </location>
</feature>
<feature type="turn" evidence="3">
    <location>
        <begin position="98"/>
        <end position="101"/>
    </location>
</feature>
<feature type="helix" evidence="3">
    <location>
        <begin position="103"/>
        <end position="106"/>
    </location>
</feature>
<feature type="strand" evidence="3">
    <location>
        <begin position="108"/>
        <end position="110"/>
    </location>
</feature>
<feature type="strand" evidence="3">
    <location>
        <begin position="113"/>
        <end position="125"/>
    </location>
</feature>
<feature type="strand" evidence="3">
    <location>
        <begin position="129"/>
        <end position="144"/>
    </location>
</feature>
<feature type="strand" evidence="3">
    <location>
        <begin position="150"/>
        <end position="153"/>
    </location>
</feature>
<feature type="strand" evidence="4">
    <location>
        <begin position="155"/>
        <end position="157"/>
    </location>
</feature>
<feature type="strand" evidence="3">
    <location>
        <begin position="159"/>
        <end position="166"/>
    </location>
</feature>
<feature type="strand" evidence="3">
    <location>
        <begin position="169"/>
        <end position="175"/>
    </location>
</feature>
<feature type="helix" evidence="3">
    <location>
        <begin position="176"/>
        <end position="180"/>
    </location>
</feature>
<feature type="strand" evidence="3">
    <location>
        <begin position="189"/>
        <end position="193"/>
    </location>
</feature>
<feature type="strand" evidence="2">
    <location>
        <begin position="287"/>
        <end position="295"/>
    </location>
</feature>
<feature type="helix" evidence="2">
    <location>
        <begin position="296"/>
        <end position="309"/>
    </location>
</feature>
<feature type="strand" evidence="2">
    <location>
        <begin position="314"/>
        <end position="317"/>
    </location>
</feature>
<feature type="turn" evidence="2">
    <location>
        <begin position="325"/>
        <end position="327"/>
    </location>
</feature>
<feature type="strand" evidence="2">
    <location>
        <begin position="330"/>
        <end position="336"/>
    </location>
</feature>
<feature type="helix" evidence="2">
    <location>
        <begin position="340"/>
        <end position="349"/>
    </location>
</feature>
<feature type="strand" evidence="2">
    <location>
        <begin position="356"/>
        <end position="364"/>
    </location>
</feature>
<proteinExistence type="evidence at protein level"/>
<organism>
    <name type="scientific">Human papillomavirus type 18</name>
    <dbReference type="NCBI Taxonomy" id="333761"/>
    <lineage>
        <taxon>Viruses</taxon>
        <taxon>Monodnaviria</taxon>
        <taxon>Shotokuvirae</taxon>
        <taxon>Cossaviricota</taxon>
        <taxon>Papovaviricetes</taxon>
        <taxon>Zurhausenvirales</taxon>
        <taxon>Papillomaviridae</taxon>
        <taxon>Firstpapillomavirinae</taxon>
        <taxon>Alphapapillomavirus</taxon>
        <taxon>Alphapapillomavirus 7</taxon>
    </lineage>
</organism>
<sequence>MQTPKETLSERLSCVQDKIIDHYENDSKDIDSQIQYWQLIRWENAIFFAAREHGIQTLNHQVVPAYNISKSKAHKAIELQMALQGLAQSAYKTEDWTLQDTCEELWNTEPTHCFKKGGQTVQVYFDGNKDNCMTYVAWDSVYYMTDAGTWDKTATCVSHRGLYYVKEGYNTFYIEFKSECEKYGNTGTWEVHFGNNVIDCNDSMCSTSDDTVSATQLVKQLQHTPSPYSSTVSVGTAKTYGQTSAATRPGHCGLAEKQHCGPVNPLLGAATPTGNNKRRKLCSGNTTPIIHLKGDRNSLKCLRYRLRKHSDHYRDISSTWHWTGAGNEKTGILTVTYHSETQRTKFLNTVAIPDSVQILVGYMTM</sequence>
<comment type="function">
    <text evidence="1">Plays a role in the initiation of viral DNA replication. A dimer of E2 interacts with a dimer of E1 in order to improve specificity of E1 DNA binding activity. Once the complex recognizes and binds DNA at specific sites, the E2 dimer is removed from DNA. E2 also regulates viral transcription through binding to the E2RE response element (5'-ACCNNNNNNGGT-3') present in multiple copies in the regulatory regions of the viral genome. Activates or represses transcription depending on E2RE's position with regards to proximal promoter elements including the TATA-box. Repression occurs by sterically hindering the assembly of the transcription initiation complex.</text>
</comment>
<comment type="subunit">
    <text evidence="1">Binds DNA as homodimer. Interacts with protein E1; this interaction greatly increases E1 DNA-binding activity. Interacts with protein L1; this interaction enhances E2-dependent replication and transcription activation. Interacts with protein L2; this interaction inhibits E2 transcriptional activity but not DNA replication function E2. Interacts with protein E7; this interaction inhibits E7 oncogenic activity. Interacts with host TAF1; this interaction modulates E2-dependent transcriptional regulation. Interacts with host BRD4; this interaction mediates E2 transcriptional activation function. Additionally, the interaction with host BRD4 on mitotic chromosomes mediates tethering of the viral genome. Interacts with host TOPBP1; this interaction is required for optimal viral DNA replication.</text>
</comment>
<comment type="interaction">
    <interactant intactId="EBI-7010629">
        <id>P06790</id>
    </interactant>
    <interactant intactId="EBI-723869">
        <id>O60885</id>
        <label>BRD4</label>
    </interactant>
    <organismsDiffer>true</organismsDiffer>
    <experiments>2</experiments>
</comment>
<comment type="interaction">
    <interactant intactId="EBI-7010629">
        <id>P06790</id>
    </interactant>
    <interactant intactId="EBI-969696">
        <id>P17676</id>
        <label>CEBPB</label>
    </interactant>
    <organismsDiffer>true</organismsDiffer>
    <experiments>4</experiments>
</comment>
<comment type="interaction">
    <interactant intactId="EBI-7010629">
        <id>P06790</id>
    </interactant>
    <interactant intactId="EBI-447295">
        <id>Q09472</id>
        <label>EP300</label>
    </interactant>
    <organismsDiffer>true</organismsDiffer>
    <experiments>6</experiments>
</comment>
<comment type="subcellular location">
    <subcellularLocation>
        <location evidence="1">Host nucleus</location>
    </subcellularLocation>
</comment>
<comment type="PTM">
    <text evidence="1">Phosphorylated.</text>
</comment>
<comment type="PTM">
    <text evidence="1">Sumoylation plays a regulatory role in E2 transcriptional activity.</text>
</comment>
<comment type="similarity">
    <text evidence="1">Belongs to the papillomaviridae E2 protein family.</text>
</comment>
<evidence type="ECO:0000255" key="1">
    <source>
        <dbReference type="HAMAP-Rule" id="MF_04001"/>
    </source>
</evidence>
<evidence type="ECO:0007829" key="2">
    <source>
        <dbReference type="PDB" id="1F9F"/>
    </source>
</evidence>
<evidence type="ECO:0007829" key="3">
    <source>
        <dbReference type="PDB" id="1QQH"/>
    </source>
</evidence>
<evidence type="ECO:0007829" key="4">
    <source>
        <dbReference type="PDB" id="1TUE"/>
    </source>
</evidence>
<reference key="1">
    <citation type="journal article" date="1987" name="J. Mol. Biol.">
        <title>Nucleotide sequence and comparative analysis of the human papillomavirus type 18 genome. Phylogeny of papillomaviruses and repeated structure of the E6 and E7 gene products.</title>
        <authorList>
            <person name="Cole S.T."/>
            <person name="Danos O."/>
        </authorList>
    </citation>
    <scope>NUCLEOTIDE SEQUENCE [GENOMIC DNA]</scope>
</reference>
<reference key="2">
    <citation type="journal article" date="1993" name="Nucleic Acids Res.">
        <title>TaqI is a single cut enzyme for HPV-18.</title>
        <authorList>
            <person name="Meissner J."/>
        </authorList>
    </citation>
    <scope>SEQUENCE REVISION TO 90</scope>
</reference>
<protein>
    <recommendedName>
        <fullName evidence="1">Regulatory protein E2</fullName>
    </recommendedName>
</protein>
<organismHost>
    <name type="scientific">Homo sapiens</name>
    <name type="common">Human</name>
    <dbReference type="NCBI Taxonomy" id="9606"/>
</organismHost>
<gene>
    <name evidence="1" type="primary">E2</name>
</gene>
<name>VE2_HPV18</name>